<name>ABAA_HAPCH</name>
<feature type="chain" id="PRO_0000435940" description="Conidiophore development regulator abaA">
    <location>
        <begin position="1"/>
        <end position="943"/>
    </location>
</feature>
<feature type="DNA-binding region" description="TEA" evidence="3">
    <location>
        <begin position="161"/>
        <end position="254"/>
    </location>
</feature>
<feature type="region of interest" description="Disordered" evidence="4">
    <location>
        <begin position="1"/>
        <end position="69"/>
    </location>
</feature>
<feature type="region of interest" description="Disordered" evidence="4">
    <location>
        <begin position="111"/>
        <end position="133"/>
    </location>
</feature>
<feature type="region of interest" description="Disordered" evidence="4">
    <location>
        <begin position="537"/>
        <end position="575"/>
    </location>
</feature>
<feature type="region of interest" description="Disordered" evidence="4">
    <location>
        <begin position="809"/>
        <end position="901"/>
    </location>
</feature>
<feature type="compositionally biased region" description="Basic and acidic residues" evidence="4">
    <location>
        <begin position="29"/>
        <end position="43"/>
    </location>
</feature>
<feature type="compositionally biased region" description="Polar residues" evidence="4">
    <location>
        <begin position="59"/>
        <end position="68"/>
    </location>
</feature>
<feature type="compositionally biased region" description="Basic and acidic residues" evidence="4">
    <location>
        <begin position="537"/>
        <end position="555"/>
    </location>
</feature>
<feature type="compositionally biased region" description="Low complexity" evidence="4">
    <location>
        <begin position="865"/>
        <end position="889"/>
    </location>
</feature>
<protein>
    <recommendedName>
        <fullName evidence="7">Conidiophore development regulator abaA</fullName>
    </recommendedName>
</protein>
<proteinExistence type="evidence at transcript level"/>
<comment type="function">
    <text evidence="2">BrlA, abaA and wetA are pivotal regulators of conidiophore development and conidium maturation (By similarity). They act individually and together to regulate their own expression and that of numerous other sporulation-specific genes (By similarity). Binds to the sequence 5'-CATTCY-3', where Y is a pyrimidine, making both major- and minor-groove contacts (By similarity).</text>
</comment>
<comment type="subcellular location">
    <subcellularLocation>
        <location evidence="1">Nucleus</location>
    </subcellularLocation>
    <text evidence="1">localizes to the nuclei of phialides and terminal cells of mature conidia (By similarity).</text>
</comment>
<comment type="induction">
    <text evidence="5">Expression is positively regulated by stuA through direct binding of stuA to the abaA promoter region (PubMed:26283234).</text>
</comment>
<comment type="similarity">
    <text evidence="7">Belongs to the TEC1 family.</text>
</comment>
<reference key="1">
    <citation type="journal article" date="2015" name="Fungal Genet. Biol.">
        <title>AcstuA, which encodes an APSES transcription regulator, is involved in conidiation, cephalosporin biosynthesis and cell wall integrity of Acremonium chrysogenum.</title>
        <authorList>
            <person name="Hu P."/>
            <person name="Wang Y."/>
            <person name="Zhou J."/>
            <person name="Pan Y."/>
            <person name="Liu G."/>
        </authorList>
    </citation>
    <scope>NUCLEOTIDE SEQUENCE [GENOMIC DNA]</scope>
    <scope>INDUCTION</scope>
    <source>
        <strain>GMCC 3.3795</strain>
    </source>
</reference>
<gene>
    <name evidence="6" type="primary">AbaA</name>
</gene>
<organism>
    <name type="scientific">Hapsidospora chrysogena</name>
    <name type="common">Acremonium chrysogenum</name>
    <dbReference type="NCBI Taxonomy" id="5044"/>
    <lineage>
        <taxon>Eukaryota</taxon>
        <taxon>Fungi</taxon>
        <taxon>Dikarya</taxon>
        <taxon>Ascomycota</taxon>
        <taxon>Pezizomycotina</taxon>
        <taxon>Sordariomycetes</taxon>
        <taxon>Hypocreomycetidae</taxon>
        <taxon>Hypocreales</taxon>
        <taxon>Bionectriaceae</taxon>
        <taxon>Hapsidospora</taxon>
    </lineage>
</organism>
<dbReference type="EMBL" id="KM207847">
    <property type="protein sequence ID" value="AIZ05822.1"/>
    <property type="molecule type" value="Genomic_DNA"/>
</dbReference>
<dbReference type="GO" id="GO:0005634">
    <property type="term" value="C:nucleus"/>
    <property type="evidence" value="ECO:0007669"/>
    <property type="project" value="UniProtKB-SubCell"/>
</dbReference>
<dbReference type="GO" id="GO:0005667">
    <property type="term" value="C:transcription regulator complex"/>
    <property type="evidence" value="ECO:0007669"/>
    <property type="project" value="TreeGrafter"/>
</dbReference>
<dbReference type="GO" id="GO:0000981">
    <property type="term" value="F:DNA-binding transcription factor activity, RNA polymerase II-specific"/>
    <property type="evidence" value="ECO:0007669"/>
    <property type="project" value="TreeGrafter"/>
</dbReference>
<dbReference type="GO" id="GO:0000978">
    <property type="term" value="F:RNA polymerase II cis-regulatory region sequence-specific DNA binding"/>
    <property type="evidence" value="ECO:0007669"/>
    <property type="project" value="TreeGrafter"/>
</dbReference>
<dbReference type="GO" id="GO:0048315">
    <property type="term" value="P:conidium formation"/>
    <property type="evidence" value="ECO:0007669"/>
    <property type="project" value="UniProtKB-KW"/>
</dbReference>
<dbReference type="GO" id="GO:0030435">
    <property type="term" value="P:sporulation resulting in formation of a cellular spore"/>
    <property type="evidence" value="ECO:0007669"/>
    <property type="project" value="UniProtKB-KW"/>
</dbReference>
<dbReference type="Gene3D" id="6.10.20.40">
    <property type="entry name" value="TEA/ATTS domain"/>
    <property type="match status" value="1"/>
</dbReference>
<dbReference type="InterPro" id="IPR000818">
    <property type="entry name" value="TEA/ATTS_dom"/>
</dbReference>
<dbReference type="InterPro" id="IPR038096">
    <property type="entry name" value="TEA/ATTS_sf"/>
</dbReference>
<dbReference type="InterPro" id="IPR050937">
    <property type="entry name" value="TEC1_TEAD_TF"/>
</dbReference>
<dbReference type="PANTHER" id="PTHR11834:SF0">
    <property type="entry name" value="PROTEIN SCALLOPED"/>
    <property type="match status" value="1"/>
</dbReference>
<dbReference type="PANTHER" id="PTHR11834">
    <property type="entry name" value="TRANSCRIPTIONAL ENHANCER FACTOR TEF RELATED"/>
    <property type="match status" value="1"/>
</dbReference>
<dbReference type="Pfam" id="PF01285">
    <property type="entry name" value="TEA"/>
    <property type="match status" value="1"/>
</dbReference>
<dbReference type="SMART" id="SM00426">
    <property type="entry name" value="TEA"/>
    <property type="match status" value="1"/>
</dbReference>
<dbReference type="PROSITE" id="PS51088">
    <property type="entry name" value="TEA_2"/>
    <property type="match status" value="1"/>
</dbReference>
<evidence type="ECO:0000250" key="1">
    <source>
        <dbReference type="UniProtKB" id="I1S4T3"/>
    </source>
</evidence>
<evidence type="ECO:0000250" key="2">
    <source>
        <dbReference type="UniProtKB" id="P22022"/>
    </source>
</evidence>
<evidence type="ECO:0000255" key="3">
    <source>
        <dbReference type="PROSITE-ProRule" id="PRU00505"/>
    </source>
</evidence>
<evidence type="ECO:0000256" key="4">
    <source>
        <dbReference type="SAM" id="MobiDB-lite"/>
    </source>
</evidence>
<evidence type="ECO:0000269" key="5">
    <source>
    </source>
</evidence>
<evidence type="ECO:0000303" key="6">
    <source>
    </source>
</evidence>
<evidence type="ECO:0000305" key="7"/>
<accession>A0A0A7HMS2</accession>
<sequence>MSSSSSQSSLYQPRPVLSSQRFSPAPDYIDTRRSFHGDSRLPLRESTGNVQQQHHHQEPSSAHSSFNGGSLVGCYQTPVTLSPSMQSSIPPPAPIVPSQSFDCLRSLQATTSRQHHHVPPPLPQVPTRYHQRGKPRNSINPLYFWPAFRQYRNRQAHKDTQKDKGGVWRRPELEDAFVDSVLLMPHMGRRKFSMGGKLHGRNMLISEYIFVICVALLGSKEIFRIDNSNDSIEQMGRKQVSSHMQVVKKFFEDLRCFHFLFPSEEKKEPGTTNSDDFYEEEEQESFKSNPVLTALAEGRVPDVRPNYEYFSQLLALQSSITVRPKTVEIFVSSADVKIRDEVAYDANDNPLDPASFPHLGKYMNSSGDDKPNVLGKDVLLHEYTRSLDRSTSACVKTVTRRWQRDAPAMYDSLDLPDRDEDCLLLEMCSTVDLHEHAKFPSGSELTGYVEVSVTQPALQGHRWKCVTRLTRPPELQTDEGRPEMYSNESGIHRRGCADTRHEDCGCHLRPRQDIHVPFPAVEWASILSMAVQYPDVEHQRKKEKRSCGKKPDLERSASSSKRKRSEDEGDAAAWTRREPTGSDLICKVAMYQELWSCAPDSTRWTRQAIIFWRFSTTNQWYKYNPVFRPAGTTWRWLTVNDPMSRYHQQRALVYPSAGGNNMPRDAVMSPTPSVSQHLTATMSENFSQAWDSSGSNVTTHTQVHVAGGGGGGGSNMTTLFDSFPSGLATPPPTASLHGSYSASGSFDAGNGVGGCYMPPTCGGGADGPHGGLPAPSQSYFDAAGQTVNTTFGDVKPLLSGSATNPYLPGAAGGGGTGSLDLSGQFAYDDGQQHQHQHQHQQHQQQNHNGGSNGGLPGWDMGPALDSWTAGSSAGGAPAATPTGPDWGPTAPVPRMTEHHPGMWDPVHWSNHGTPGRGGEGSPRQMKRRRTEVLVDGVPVTAGW</sequence>
<keyword id="KW-0010">Activator</keyword>
<keyword id="KW-0183">Conidiation</keyword>
<keyword id="KW-0539">Nucleus</keyword>
<keyword id="KW-0749">Sporulation</keyword>
<keyword id="KW-0804">Transcription</keyword>
<keyword id="KW-0805">Transcription regulation</keyword>